<evidence type="ECO:0000250" key="1"/>
<evidence type="ECO:0000250" key="2">
    <source>
        <dbReference type="UniProtKB" id="O15392"/>
    </source>
</evidence>
<evidence type="ECO:0000250" key="3">
    <source>
        <dbReference type="UniProtKB" id="P98170"/>
    </source>
</evidence>
<evidence type="ECO:0000250" key="4">
    <source>
        <dbReference type="UniProtKB" id="Q8JHV9"/>
    </source>
</evidence>
<evidence type="ECO:0000250" key="5">
    <source>
        <dbReference type="UniProtKB" id="Q96CA5"/>
    </source>
</evidence>
<evidence type="ECO:0000255" key="6"/>
<evidence type="ECO:0000255" key="7">
    <source>
        <dbReference type="PROSITE-ProRule" id="PRU00029"/>
    </source>
</evidence>
<evidence type="ECO:0000255" key="8">
    <source>
        <dbReference type="PROSITE-ProRule" id="PRU00175"/>
    </source>
</evidence>
<evidence type="ECO:0000256" key="9">
    <source>
        <dbReference type="SAM" id="MobiDB-lite"/>
    </source>
</evidence>
<evidence type="ECO:0000305" key="10"/>
<evidence type="ECO:0000312" key="11">
    <source>
        <dbReference type="EMBL" id="AAI55424.1"/>
    </source>
</evidence>
<accession>A9JTP3</accession>
<gene>
    <name type="primary">birc7</name>
</gene>
<comment type="function">
    <text evidence="4">Weak apoptotic suppressor. Has E3 ubiquitin-protein ligase activity. Weak inhibitor of caspase activity.</text>
</comment>
<comment type="catalytic activity">
    <reaction evidence="5">
        <text>S-ubiquitinyl-[E2 ubiquitin-conjugating enzyme]-L-cysteine + [acceptor protein]-L-lysine = [E2 ubiquitin-conjugating enzyme]-L-cysteine + N(6)-ubiquitinyl-[acceptor protein]-L-lysine.</text>
        <dbReference type="EC" id="2.3.2.27"/>
    </reaction>
</comment>
<comment type="subcellular location">
    <subcellularLocation>
        <location evidence="3">Cytoplasm</location>
    </subcellularLocation>
</comment>
<comment type="domain">
    <text evidence="4">The BIR2 domain is required for caspase-inhibition.</text>
</comment>
<comment type="domain">
    <text evidence="4">The C-terminal region containing the RING finger domain is required for the initial degradation step, and the final digestion of cleavage fragments.</text>
</comment>
<comment type="PTM">
    <text evidence="1">Auto-ubiquitinated, and degraded in a 2-step mechanism; a caspase-independent first step and a caspase-dependent second step.</text>
</comment>
<comment type="PTM">
    <text evidence="4">Phosphorylated via MAPK-dependent and CDK-dependent pathways during oocyte maturation. Phosphorylation does not appear to affect caspase inhibition or autoubiquitination activity.</text>
</comment>
<comment type="similarity">
    <text evidence="6">Belongs to the IAP family.</text>
</comment>
<keyword id="KW-0053">Apoptosis</keyword>
<keyword id="KW-0963">Cytoplasm</keyword>
<keyword id="KW-0217">Developmental protein</keyword>
<keyword id="KW-0479">Metal-binding</keyword>
<keyword id="KW-0597">Phosphoprotein</keyword>
<keyword id="KW-0646">Protease inhibitor</keyword>
<keyword id="KW-1185">Reference proteome</keyword>
<keyword id="KW-0677">Repeat</keyword>
<keyword id="KW-0789">Thiol protease inhibitor</keyword>
<keyword id="KW-0808">Transferase</keyword>
<keyword id="KW-0832">Ubl conjugation</keyword>
<keyword id="KW-0833">Ubl conjugation pathway</keyword>
<keyword id="KW-0862">Zinc</keyword>
<keyword id="KW-0863">Zinc-finger</keyword>
<organism>
    <name type="scientific">Xenopus tropicalis</name>
    <name type="common">Western clawed frog</name>
    <name type="synonym">Silurana tropicalis</name>
    <dbReference type="NCBI Taxonomy" id="8364"/>
    <lineage>
        <taxon>Eukaryota</taxon>
        <taxon>Metazoa</taxon>
        <taxon>Chordata</taxon>
        <taxon>Craniata</taxon>
        <taxon>Vertebrata</taxon>
        <taxon>Euteleostomi</taxon>
        <taxon>Amphibia</taxon>
        <taxon>Batrachia</taxon>
        <taxon>Anura</taxon>
        <taxon>Pipoidea</taxon>
        <taxon>Pipidae</taxon>
        <taxon>Xenopodinae</taxon>
        <taxon>Xenopus</taxon>
        <taxon>Silurana</taxon>
    </lineage>
</organism>
<feature type="chain" id="PRO_0000379961" description="Baculoviral IAP repeat-containing protein 7">
    <location>
        <begin position="1"/>
        <end position="365"/>
    </location>
</feature>
<feature type="repeat" description="BIR 1" evidence="6">
    <location>
        <begin position="7"/>
        <end position="73"/>
    </location>
</feature>
<feature type="repeat" description="BIR 2" evidence="6">
    <location>
        <begin position="115"/>
        <end position="180"/>
    </location>
</feature>
<feature type="zinc finger region" description="RING-type" evidence="8">
    <location>
        <begin position="318"/>
        <end position="353"/>
    </location>
</feature>
<feature type="region of interest" description="Self-inhibits the anti-apoptotic function" evidence="4">
    <location>
        <begin position="186"/>
        <end position="234"/>
    </location>
</feature>
<feature type="region of interest" description="Disordered" evidence="9">
    <location>
        <begin position="278"/>
        <end position="306"/>
    </location>
</feature>
<feature type="compositionally biased region" description="Basic and acidic residues" evidence="9">
    <location>
        <begin position="288"/>
        <end position="297"/>
    </location>
</feature>
<feature type="binding site" evidence="2 7">
    <location>
        <position position="149"/>
    </location>
    <ligand>
        <name>Zn(2+)</name>
        <dbReference type="ChEBI" id="CHEBI:29105"/>
    </ligand>
</feature>
<feature type="binding site" evidence="2 7">
    <location>
        <position position="152"/>
    </location>
    <ligand>
        <name>Zn(2+)</name>
        <dbReference type="ChEBI" id="CHEBI:29105"/>
    </ligand>
</feature>
<feature type="binding site" evidence="2 7">
    <location>
        <position position="169"/>
    </location>
    <ligand>
        <name>Zn(2+)</name>
        <dbReference type="ChEBI" id="CHEBI:29105"/>
    </ligand>
</feature>
<feature type="binding site" evidence="2 7">
    <location>
        <position position="176"/>
    </location>
    <ligand>
        <name>Zn(2+)</name>
        <dbReference type="ChEBI" id="CHEBI:29105"/>
    </ligand>
</feature>
<feature type="modified residue" description="Phosphoserine" evidence="4">
    <location>
        <position position="198"/>
    </location>
</feature>
<feature type="modified residue" description="Phosphoserine; by MAPK1" evidence="1">
    <location>
        <position position="202"/>
    </location>
</feature>
<feature type="modified residue" description="Phosphoserine" evidence="4">
    <location>
        <position position="212"/>
    </location>
</feature>
<feature type="modified residue" description="Phosphoserine; by MAPK1" evidence="1">
    <location>
        <position position="216"/>
    </location>
</feature>
<feature type="modified residue" description="Phosphoserine; by MAPK1" evidence="1">
    <location>
        <position position="219"/>
    </location>
</feature>
<protein>
    <recommendedName>
        <fullName>Baculoviral IAP repeat-containing protein 7</fullName>
        <ecNumber evidence="5">2.3.2.27</ecNumber>
    </recommendedName>
    <alternativeName>
        <fullName evidence="4">E3 ubiquitin-protein ligase EIAP</fullName>
    </alternativeName>
    <alternativeName>
        <fullName evidence="4">Embryonic/Egg IAP</fullName>
        <shortName evidence="4">EIAP/XLX</shortName>
    </alternativeName>
    <alternativeName>
        <fullName evidence="10">RING-type E3 ubiquitin transferase BIRC7</fullName>
    </alternativeName>
</protein>
<proteinExistence type="evidence at transcript level"/>
<sequence length="365" mass="40517">MRSEAERQRSFRAWPHTCRTVSPAELARSGFYYLGPGDRVQCFSCGGVLRSWEPGDRPDTEHRKFFPSCPFLQVRRGPPGGTDSVDGQILGQLSGEEPDRTWEPVCPQMAGEGDRLGSFSTWPRYANGDPQQLAGAGFFYTGHRDHVKCFHCDGGLRNWEQGDDPWTEHAKWFPMCDFLLQVKGEAFIRSVQESFFSSPETSPESVGSYEGSPVSSPGSPPVCPFLSTSVAQGALQMGFKRNRVSSLMINRFILTGSCYGSVSELVTDLIQAEEIHGTESVSVPRAPTQRERPEPPKEPAPPLSTEEQLRQLKEERMCKVCMDNDVSMVFVPCGHLVVCTECAPNLRHCPICRAAIRGSVRAFMS</sequence>
<name>BIRC7_XENTR</name>
<dbReference type="EC" id="2.3.2.27" evidence="5"/>
<dbReference type="EMBL" id="BC155423">
    <property type="protein sequence ID" value="AAI55424.1"/>
    <property type="molecule type" value="mRNA"/>
</dbReference>
<dbReference type="RefSeq" id="NP_001106593.2">
    <property type="nucleotide sequence ID" value="NM_001113122.1"/>
</dbReference>
<dbReference type="SMR" id="A9JTP3"/>
<dbReference type="STRING" id="8364.ENSXETP00000033924"/>
<dbReference type="PaxDb" id="8364-ENSXETP00000060882"/>
<dbReference type="GeneID" id="100127811"/>
<dbReference type="KEGG" id="xtr:100127811"/>
<dbReference type="CTD" id="79444"/>
<dbReference type="eggNOG" id="KOG1101">
    <property type="taxonomic scope" value="Eukaryota"/>
</dbReference>
<dbReference type="InParanoid" id="A9JTP3"/>
<dbReference type="OrthoDB" id="774873at2759"/>
<dbReference type="Proteomes" id="UP000008143">
    <property type="component" value="Chromosome 10"/>
</dbReference>
<dbReference type="GO" id="GO:0005737">
    <property type="term" value="C:cytoplasm"/>
    <property type="evidence" value="ECO:0000250"/>
    <property type="project" value="UniProtKB"/>
</dbReference>
<dbReference type="GO" id="GO:0004869">
    <property type="term" value="F:cysteine-type endopeptidase inhibitor activity"/>
    <property type="evidence" value="ECO:0000250"/>
    <property type="project" value="UniProtKB"/>
</dbReference>
<dbReference type="GO" id="GO:0016740">
    <property type="term" value="F:transferase activity"/>
    <property type="evidence" value="ECO:0007669"/>
    <property type="project" value="UniProtKB-KW"/>
</dbReference>
<dbReference type="GO" id="GO:0008270">
    <property type="term" value="F:zinc ion binding"/>
    <property type="evidence" value="ECO:0007669"/>
    <property type="project" value="UniProtKB-KW"/>
</dbReference>
<dbReference type="GO" id="GO:0006915">
    <property type="term" value="P:apoptotic process"/>
    <property type="evidence" value="ECO:0007669"/>
    <property type="project" value="UniProtKB-KW"/>
</dbReference>
<dbReference type="GO" id="GO:0043066">
    <property type="term" value="P:negative regulation of apoptotic process"/>
    <property type="evidence" value="ECO:0000250"/>
    <property type="project" value="UniProtKB"/>
</dbReference>
<dbReference type="GO" id="GO:0051865">
    <property type="term" value="P:protein autoubiquitination"/>
    <property type="evidence" value="ECO:0000250"/>
    <property type="project" value="UniProtKB"/>
</dbReference>
<dbReference type="CDD" id="cd00022">
    <property type="entry name" value="BIR"/>
    <property type="match status" value="2"/>
</dbReference>
<dbReference type="CDD" id="cd16713">
    <property type="entry name" value="RING-HC_BIRC2_3_7"/>
    <property type="match status" value="1"/>
</dbReference>
<dbReference type="CDD" id="cd14396">
    <property type="entry name" value="UBA_XtBIRC7_like"/>
    <property type="match status" value="1"/>
</dbReference>
<dbReference type="FunFam" id="3.30.40.10:FF:000184">
    <property type="entry name" value="Baculoviral IAP repeat containing 2"/>
    <property type="match status" value="1"/>
</dbReference>
<dbReference type="FunFam" id="1.10.1170.10:FF:000002">
    <property type="entry name" value="Baculoviral IAP repeat containing 7"/>
    <property type="match status" value="1"/>
</dbReference>
<dbReference type="FunFam" id="1.10.1170.10:FF:000023">
    <property type="entry name" value="Baculoviral IAP repeat-containing protein 7"/>
    <property type="match status" value="1"/>
</dbReference>
<dbReference type="FunFam" id="1.10.1170.10:FF:000003">
    <property type="entry name" value="E3 ubiquitin-protein ligase XIAP"/>
    <property type="match status" value="1"/>
</dbReference>
<dbReference type="Gene3D" id="1.10.8.10">
    <property type="entry name" value="DNA helicase RuvA subunit, C-terminal domain"/>
    <property type="match status" value="1"/>
</dbReference>
<dbReference type="Gene3D" id="1.10.1170.10">
    <property type="entry name" value="Inhibitor Of Apoptosis Protein (2mihbC-IAP-1), Chain A"/>
    <property type="match status" value="2"/>
</dbReference>
<dbReference type="Gene3D" id="3.30.40.10">
    <property type="entry name" value="Zinc/RING finger domain, C3HC4 (zinc finger)"/>
    <property type="match status" value="1"/>
</dbReference>
<dbReference type="InterPro" id="IPR001370">
    <property type="entry name" value="BIR_rpt"/>
</dbReference>
<dbReference type="InterPro" id="IPR048875">
    <property type="entry name" value="BIRC2-3-like_UBA"/>
</dbReference>
<dbReference type="InterPro" id="IPR050784">
    <property type="entry name" value="IAP"/>
</dbReference>
<dbReference type="InterPro" id="IPR001841">
    <property type="entry name" value="Znf_RING"/>
</dbReference>
<dbReference type="InterPro" id="IPR013083">
    <property type="entry name" value="Znf_RING/FYVE/PHD"/>
</dbReference>
<dbReference type="PANTHER" id="PTHR10044:SF163">
    <property type="entry name" value="BACULOVIRAL IAP REPEAT-CONTAINING PROTEIN 7"/>
    <property type="match status" value="1"/>
</dbReference>
<dbReference type="PANTHER" id="PTHR10044">
    <property type="entry name" value="INHIBITOR OF APOPTOSIS"/>
    <property type="match status" value="1"/>
</dbReference>
<dbReference type="Pfam" id="PF00653">
    <property type="entry name" value="BIR"/>
    <property type="match status" value="2"/>
</dbReference>
<dbReference type="Pfam" id="PF21290">
    <property type="entry name" value="UBA_BIRC2-3"/>
    <property type="match status" value="1"/>
</dbReference>
<dbReference type="Pfam" id="PF13920">
    <property type="entry name" value="zf-C3HC4_3"/>
    <property type="match status" value="1"/>
</dbReference>
<dbReference type="SMART" id="SM00238">
    <property type="entry name" value="BIR"/>
    <property type="match status" value="2"/>
</dbReference>
<dbReference type="SMART" id="SM00184">
    <property type="entry name" value="RING"/>
    <property type="match status" value="1"/>
</dbReference>
<dbReference type="SUPFAM" id="SSF57924">
    <property type="entry name" value="Inhibitor of apoptosis (IAP) repeat"/>
    <property type="match status" value="2"/>
</dbReference>
<dbReference type="PROSITE" id="PS01282">
    <property type="entry name" value="BIR_REPEAT_1"/>
    <property type="match status" value="2"/>
</dbReference>
<dbReference type="PROSITE" id="PS50143">
    <property type="entry name" value="BIR_REPEAT_2"/>
    <property type="match status" value="2"/>
</dbReference>
<dbReference type="PROSITE" id="PS50089">
    <property type="entry name" value="ZF_RING_2"/>
    <property type="match status" value="1"/>
</dbReference>
<reference evidence="11" key="1">
    <citation type="submission" date="2007-11" db="EMBL/GenBank/DDBJ databases">
        <authorList>
            <consortium name="NIH - Xenopus Gene Collection (XGC) project"/>
        </authorList>
    </citation>
    <scope>NUCLEOTIDE SEQUENCE [LARGE SCALE MRNA]</scope>
    <source>
        <strain evidence="11">N6</strain>
        <tissue evidence="11">Oviduct</tissue>
    </source>
</reference>